<accession>Q8PH65</accession>
<comment type="function">
    <text evidence="1">Essential for recycling GMP and indirectly, cGMP.</text>
</comment>
<comment type="catalytic activity">
    <reaction evidence="1">
        <text>GMP + ATP = GDP + ADP</text>
        <dbReference type="Rhea" id="RHEA:20780"/>
        <dbReference type="ChEBI" id="CHEBI:30616"/>
        <dbReference type="ChEBI" id="CHEBI:58115"/>
        <dbReference type="ChEBI" id="CHEBI:58189"/>
        <dbReference type="ChEBI" id="CHEBI:456216"/>
        <dbReference type="EC" id="2.7.4.8"/>
    </reaction>
</comment>
<comment type="subcellular location">
    <subcellularLocation>
        <location evidence="1">Cytoplasm</location>
    </subcellularLocation>
</comment>
<comment type="similarity">
    <text evidence="1">Belongs to the guanylate kinase family.</text>
</comment>
<keyword id="KW-0067">ATP-binding</keyword>
<keyword id="KW-0963">Cytoplasm</keyword>
<keyword id="KW-0418">Kinase</keyword>
<keyword id="KW-0547">Nucleotide-binding</keyword>
<keyword id="KW-0808">Transferase</keyword>
<dbReference type="EC" id="2.7.4.8" evidence="1"/>
<dbReference type="EMBL" id="AE008923">
    <property type="protein sequence ID" value="AAM38238.1"/>
    <property type="molecule type" value="Genomic_DNA"/>
</dbReference>
<dbReference type="RefSeq" id="WP_005911919.1">
    <property type="nucleotide sequence ID" value="NC_003919.1"/>
</dbReference>
<dbReference type="SMR" id="Q8PH65"/>
<dbReference type="GeneID" id="66912442"/>
<dbReference type="KEGG" id="xac:XAC3395"/>
<dbReference type="eggNOG" id="COG0194">
    <property type="taxonomic scope" value="Bacteria"/>
</dbReference>
<dbReference type="HOGENOM" id="CLU_001715_1_0_6"/>
<dbReference type="Proteomes" id="UP000000576">
    <property type="component" value="Chromosome"/>
</dbReference>
<dbReference type="GO" id="GO:0005829">
    <property type="term" value="C:cytosol"/>
    <property type="evidence" value="ECO:0007669"/>
    <property type="project" value="TreeGrafter"/>
</dbReference>
<dbReference type="GO" id="GO:0005524">
    <property type="term" value="F:ATP binding"/>
    <property type="evidence" value="ECO:0007669"/>
    <property type="project" value="UniProtKB-UniRule"/>
</dbReference>
<dbReference type="GO" id="GO:0004385">
    <property type="term" value="F:guanylate kinase activity"/>
    <property type="evidence" value="ECO:0007669"/>
    <property type="project" value="UniProtKB-UniRule"/>
</dbReference>
<dbReference type="CDD" id="cd00071">
    <property type="entry name" value="GMPK"/>
    <property type="match status" value="1"/>
</dbReference>
<dbReference type="FunFam" id="3.30.63.10:FF:000005">
    <property type="entry name" value="Guanylate kinase"/>
    <property type="match status" value="1"/>
</dbReference>
<dbReference type="Gene3D" id="3.30.63.10">
    <property type="entry name" value="Guanylate Kinase phosphate binding domain"/>
    <property type="match status" value="1"/>
</dbReference>
<dbReference type="Gene3D" id="3.40.50.300">
    <property type="entry name" value="P-loop containing nucleotide triphosphate hydrolases"/>
    <property type="match status" value="1"/>
</dbReference>
<dbReference type="HAMAP" id="MF_00328">
    <property type="entry name" value="Guanylate_kinase"/>
    <property type="match status" value="1"/>
</dbReference>
<dbReference type="InterPro" id="IPR008145">
    <property type="entry name" value="GK/Ca_channel_bsu"/>
</dbReference>
<dbReference type="InterPro" id="IPR008144">
    <property type="entry name" value="Guanylate_kin-like_dom"/>
</dbReference>
<dbReference type="InterPro" id="IPR017665">
    <property type="entry name" value="Guanylate_kinase"/>
</dbReference>
<dbReference type="InterPro" id="IPR020590">
    <property type="entry name" value="Guanylate_kinase_CS"/>
</dbReference>
<dbReference type="InterPro" id="IPR027417">
    <property type="entry name" value="P-loop_NTPase"/>
</dbReference>
<dbReference type="NCBIfam" id="TIGR03263">
    <property type="entry name" value="guanyl_kin"/>
    <property type="match status" value="1"/>
</dbReference>
<dbReference type="PANTHER" id="PTHR23117:SF13">
    <property type="entry name" value="GUANYLATE KINASE"/>
    <property type="match status" value="1"/>
</dbReference>
<dbReference type="PANTHER" id="PTHR23117">
    <property type="entry name" value="GUANYLATE KINASE-RELATED"/>
    <property type="match status" value="1"/>
</dbReference>
<dbReference type="Pfam" id="PF00625">
    <property type="entry name" value="Guanylate_kin"/>
    <property type="match status" value="1"/>
</dbReference>
<dbReference type="SMART" id="SM00072">
    <property type="entry name" value="GuKc"/>
    <property type="match status" value="1"/>
</dbReference>
<dbReference type="SUPFAM" id="SSF52540">
    <property type="entry name" value="P-loop containing nucleoside triphosphate hydrolases"/>
    <property type="match status" value="1"/>
</dbReference>
<dbReference type="PROSITE" id="PS00856">
    <property type="entry name" value="GUANYLATE_KINASE_1"/>
    <property type="match status" value="1"/>
</dbReference>
<dbReference type="PROSITE" id="PS50052">
    <property type="entry name" value="GUANYLATE_KINASE_2"/>
    <property type="match status" value="1"/>
</dbReference>
<reference key="1">
    <citation type="journal article" date="2002" name="Nature">
        <title>Comparison of the genomes of two Xanthomonas pathogens with differing host specificities.</title>
        <authorList>
            <person name="da Silva A.C.R."/>
            <person name="Ferro J.A."/>
            <person name="Reinach F.C."/>
            <person name="Farah C.S."/>
            <person name="Furlan L.R."/>
            <person name="Quaggio R.B."/>
            <person name="Monteiro-Vitorello C.B."/>
            <person name="Van Sluys M.A."/>
            <person name="Almeida N.F. Jr."/>
            <person name="Alves L.M.C."/>
            <person name="do Amaral A.M."/>
            <person name="Bertolini M.C."/>
            <person name="Camargo L.E.A."/>
            <person name="Camarotte G."/>
            <person name="Cannavan F."/>
            <person name="Cardozo J."/>
            <person name="Chambergo F."/>
            <person name="Ciapina L.P."/>
            <person name="Cicarelli R.M.B."/>
            <person name="Coutinho L.L."/>
            <person name="Cursino-Santos J.R."/>
            <person name="El-Dorry H."/>
            <person name="Faria J.B."/>
            <person name="Ferreira A.J.S."/>
            <person name="Ferreira R.C.C."/>
            <person name="Ferro M.I.T."/>
            <person name="Formighieri E.F."/>
            <person name="Franco M.C."/>
            <person name="Greggio C.C."/>
            <person name="Gruber A."/>
            <person name="Katsuyama A.M."/>
            <person name="Kishi L.T."/>
            <person name="Leite R.P."/>
            <person name="Lemos E.G.M."/>
            <person name="Lemos M.V.F."/>
            <person name="Locali E.C."/>
            <person name="Machado M.A."/>
            <person name="Madeira A.M.B.N."/>
            <person name="Martinez-Rossi N.M."/>
            <person name="Martins E.C."/>
            <person name="Meidanis J."/>
            <person name="Menck C.F.M."/>
            <person name="Miyaki C.Y."/>
            <person name="Moon D.H."/>
            <person name="Moreira L.M."/>
            <person name="Novo M.T.M."/>
            <person name="Okura V.K."/>
            <person name="Oliveira M.C."/>
            <person name="Oliveira V.R."/>
            <person name="Pereira H.A."/>
            <person name="Rossi A."/>
            <person name="Sena J.A.D."/>
            <person name="Silva C."/>
            <person name="de Souza R.F."/>
            <person name="Spinola L.A.F."/>
            <person name="Takita M.A."/>
            <person name="Tamura R.E."/>
            <person name="Teixeira E.C."/>
            <person name="Tezza R.I.D."/>
            <person name="Trindade dos Santos M."/>
            <person name="Truffi D."/>
            <person name="Tsai S.M."/>
            <person name="White F.F."/>
            <person name="Setubal J.C."/>
            <person name="Kitajima J.P."/>
        </authorList>
    </citation>
    <scope>NUCLEOTIDE SEQUENCE [LARGE SCALE GENOMIC DNA]</scope>
    <source>
        <strain>306</strain>
    </source>
</reference>
<organism>
    <name type="scientific">Xanthomonas axonopodis pv. citri (strain 306)</name>
    <dbReference type="NCBI Taxonomy" id="190486"/>
    <lineage>
        <taxon>Bacteria</taxon>
        <taxon>Pseudomonadati</taxon>
        <taxon>Pseudomonadota</taxon>
        <taxon>Gammaproteobacteria</taxon>
        <taxon>Lysobacterales</taxon>
        <taxon>Lysobacteraceae</taxon>
        <taxon>Xanthomonas</taxon>
    </lineage>
</organism>
<protein>
    <recommendedName>
        <fullName evidence="1">Guanylate kinase</fullName>
        <ecNumber evidence="1">2.7.4.8</ecNumber>
    </recommendedName>
    <alternativeName>
        <fullName evidence="1">GMP kinase</fullName>
    </alternativeName>
</protein>
<gene>
    <name evidence="1" type="primary">gmk</name>
    <name type="ordered locus">XAC3395</name>
</gene>
<sequence length="203" mass="22736">MRGTLYIVAAPSGAGKSSIVNATLARDPKIALSISFTSRAPRPGERHAEHYHFVSADEFQGMIEAGDFFEYALVHGDWKGTARQSVEPQLAAGHDVLLEIDWQGARQVRQKVPDAVSVFILPPSRQALDERMRKRGQDSEVVMAQRLAAAREEMLHFEEFDYVIINETFDTAVSEMCAIFTASRLRRQAQQQRHAGLIRALLD</sequence>
<proteinExistence type="inferred from homology"/>
<name>KGUA_XANAC</name>
<evidence type="ECO:0000255" key="1">
    <source>
        <dbReference type="HAMAP-Rule" id="MF_00328"/>
    </source>
</evidence>
<feature type="chain" id="PRO_0000170643" description="Guanylate kinase">
    <location>
        <begin position="1"/>
        <end position="203"/>
    </location>
</feature>
<feature type="domain" description="Guanylate kinase-like" evidence="1">
    <location>
        <begin position="3"/>
        <end position="181"/>
    </location>
</feature>
<feature type="binding site" evidence="1">
    <location>
        <begin position="10"/>
        <end position="17"/>
    </location>
    <ligand>
        <name>ATP</name>
        <dbReference type="ChEBI" id="CHEBI:30616"/>
    </ligand>
</feature>